<organism>
    <name type="scientific">Pongo abelii</name>
    <name type="common">Sumatran orangutan</name>
    <name type="synonym">Pongo pygmaeus abelii</name>
    <dbReference type="NCBI Taxonomy" id="9601"/>
    <lineage>
        <taxon>Eukaryota</taxon>
        <taxon>Metazoa</taxon>
        <taxon>Chordata</taxon>
        <taxon>Craniata</taxon>
        <taxon>Vertebrata</taxon>
        <taxon>Euteleostomi</taxon>
        <taxon>Mammalia</taxon>
        <taxon>Eutheria</taxon>
        <taxon>Euarchontoglires</taxon>
        <taxon>Primates</taxon>
        <taxon>Haplorrhini</taxon>
        <taxon>Catarrhini</taxon>
        <taxon>Hominidae</taxon>
        <taxon>Pongo</taxon>
    </lineage>
</organism>
<feature type="chain" id="PRO_0000213461" description="Motile sperm domain-containing protein 1">
    <location>
        <begin position="1"/>
        <end position="213"/>
    </location>
</feature>
<feature type="transmembrane region" description="Helical" evidence="2">
    <location>
        <begin position="159"/>
        <end position="179"/>
    </location>
</feature>
<feature type="transmembrane region" description="Helical" evidence="2">
    <location>
        <begin position="191"/>
        <end position="211"/>
    </location>
</feature>
<feature type="domain" description="MSP" evidence="3">
    <location>
        <begin position="16"/>
        <end position="143"/>
    </location>
</feature>
<feature type="short sequence motif" description="Nuclear export signal" evidence="1">
    <location>
        <begin position="205"/>
        <end position="208"/>
    </location>
</feature>
<protein>
    <recommendedName>
        <fullName>Motile sperm domain-containing protein 1</fullName>
    </recommendedName>
</protein>
<keyword id="KW-0256">Endoplasmic reticulum</keyword>
<keyword id="KW-0333">Golgi apparatus</keyword>
<keyword id="KW-0472">Membrane</keyword>
<keyword id="KW-1185">Reference proteome</keyword>
<keyword id="KW-0812">Transmembrane</keyword>
<keyword id="KW-1133">Transmembrane helix</keyword>
<name>MSPD1_PONAB</name>
<sequence>MHQQKRQPELVEGNLPVFVFPTELIFYADDQSTHKQVLTLYNPYEFALKFKVLCTTPNKYVVVNAAGAVKPQCCVDIVIRHRDVRSCHYGVIDKFRLQVSEQSQRKALGRKEVVATLLPSAKEQQKEEEEKRIKEHLTESLFFEQSFQPENRAVSSGPSLLTVFLGVVCIAALMLPTLGDVESLVPLYLHLSVNQKLVAAYILGLITMAILRT</sequence>
<evidence type="ECO:0000250" key="1">
    <source>
        <dbReference type="UniProtKB" id="Q8VEL0"/>
    </source>
</evidence>
<evidence type="ECO:0000255" key="2"/>
<evidence type="ECO:0000255" key="3">
    <source>
        <dbReference type="PROSITE-ProRule" id="PRU00132"/>
    </source>
</evidence>
<gene>
    <name type="primary">MOSPD1</name>
</gene>
<comment type="function">
    <text evidence="1">Plays a role in differentiation and/or proliferation of mesenchymal stem cells. Proposed to be involved in epithelial-to-mesenchymal transition (EMT). However, another study suggests that it is not required for EMT or stem cell self-renewal and acts during later stages of differentiation.</text>
</comment>
<comment type="subcellular location">
    <subcellularLocation>
        <location evidence="1">Endoplasmic reticulum membrane</location>
        <topology evidence="2">Multi-pass membrane protein</topology>
    </subcellularLocation>
    <subcellularLocation>
        <location evidence="1">Golgi apparatus membrane</location>
        <topology evidence="2">Multi-pass membrane protein</topology>
    </subcellularLocation>
</comment>
<dbReference type="EMBL" id="CR858347">
    <property type="protein sequence ID" value="CAH90580.1"/>
    <property type="molecule type" value="mRNA"/>
</dbReference>
<dbReference type="RefSeq" id="NP_001125311.1">
    <property type="nucleotide sequence ID" value="NM_001131839.1"/>
</dbReference>
<dbReference type="SMR" id="Q5RCC7"/>
<dbReference type="FunCoup" id="Q5RCC7">
    <property type="interactions" value="1923"/>
</dbReference>
<dbReference type="STRING" id="9601.ENSPPYP00000023216"/>
<dbReference type="GeneID" id="100172210"/>
<dbReference type="KEGG" id="pon:100172210"/>
<dbReference type="CTD" id="56180"/>
<dbReference type="eggNOG" id="KOG0439">
    <property type="taxonomic scope" value="Eukaryota"/>
</dbReference>
<dbReference type="InParanoid" id="Q5RCC7"/>
<dbReference type="OrthoDB" id="10022288at2759"/>
<dbReference type="Proteomes" id="UP000001595">
    <property type="component" value="Unplaced"/>
</dbReference>
<dbReference type="GO" id="GO:0005789">
    <property type="term" value="C:endoplasmic reticulum membrane"/>
    <property type="evidence" value="ECO:0007669"/>
    <property type="project" value="UniProtKB-SubCell"/>
</dbReference>
<dbReference type="GO" id="GO:0000139">
    <property type="term" value="C:Golgi membrane"/>
    <property type="evidence" value="ECO:0007669"/>
    <property type="project" value="UniProtKB-SubCell"/>
</dbReference>
<dbReference type="FunFam" id="2.60.40.10:FF:000431">
    <property type="entry name" value="motile sperm domain-containing protein 1"/>
    <property type="match status" value="1"/>
</dbReference>
<dbReference type="Gene3D" id="2.60.40.10">
    <property type="entry name" value="Immunoglobulins"/>
    <property type="match status" value="1"/>
</dbReference>
<dbReference type="InterPro" id="IPR013783">
    <property type="entry name" value="Ig-like_fold"/>
</dbReference>
<dbReference type="InterPro" id="IPR039283">
    <property type="entry name" value="MOSPD1/3"/>
</dbReference>
<dbReference type="InterPro" id="IPR000535">
    <property type="entry name" value="MSP_dom"/>
</dbReference>
<dbReference type="InterPro" id="IPR008962">
    <property type="entry name" value="PapD-like_sf"/>
</dbReference>
<dbReference type="PANTHER" id="PTHR34441">
    <property type="entry name" value="MOTILE SPERM DOMAIN-CONTAINING PROTEIN 1"/>
    <property type="match status" value="1"/>
</dbReference>
<dbReference type="PANTHER" id="PTHR34441:SF2">
    <property type="entry name" value="MOTILE SPERM DOMAIN-CONTAINING PROTEIN 1"/>
    <property type="match status" value="1"/>
</dbReference>
<dbReference type="Pfam" id="PF00635">
    <property type="entry name" value="Motile_Sperm"/>
    <property type="match status" value="1"/>
</dbReference>
<dbReference type="SUPFAM" id="SSF49354">
    <property type="entry name" value="PapD-like"/>
    <property type="match status" value="1"/>
</dbReference>
<dbReference type="PROSITE" id="PS50202">
    <property type="entry name" value="MSP"/>
    <property type="match status" value="1"/>
</dbReference>
<accession>Q5RCC7</accession>
<proteinExistence type="evidence at transcript level"/>
<reference key="1">
    <citation type="submission" date="2004-11" db="EMBL/GenBank/DDBJ databases">
        <authorList>
            <consortium name="The German cDNA consortium"/>
        </authorList>
    </citation>
    <scope>NUCLEOTIDE SEQUENCE [LARGE SCALE MRNA]</scope>
    <source>
        <tissue>Brain cortex</tissue>
    </source>
</reference>